<protein>
    <recommendedName>
        <fullName>Autophagy-related protein 33</fullName>
    </recommendedName>
</protein>
<reference key="1">
    <citation type="journal article" date="1997" name="Nature">
        <title>The nucleotide sequence of Saccharomyces cerevisiae chromosome XII.</title>
        <authorList>
            <person name="Johnston M."/>
            <person name="Hillier L.W."/>
            <person name="Riles L."/>
            <person name="Albermann K."/>
            <person name="Andre B."/>
            <person name="Ansorge W."/>
            <person name="Benes V."/>
            <person name="Brueckner M."/>
            <person name="Delius H."/>
            <person name="Dubois E."/>
            <person name="Duesterhoeft A."/>
            <person name="Entian K.-D."/>
            <person name="Floeth M."/>
            <person name="Goffeau A."/>
            <person name="Hebling U."/>
            <person name="Heumann K."/>
            <person name="Heuss-Neitzel D."/>
            <person name="Hilbert H."/>
            <person name="Hilger F."/>
            <person name="Kleine K."/>
            <person name="Koetter P."/>
            <person name="Louis E.J."/>
            <person name="Messenguy F."/>
            <person name="Mewes H.-W."/>
            <person name="Miosga T."/>
            <person name="Moestl D."/>
            <person name="Mueller-Auer S."/>
            <person name="Nentwich U."/>
            <person name="Obermaier B."/>
            <person name="Piravandi E."/>
            <person name="Pohl T.M."/>
            <person name="Portetelle D."/>
            <person name="Purnelle B."/>
            <person name="Rechmann S."/>
            <person name="Rieger M."/>
            <person name="Rinke M."/>
            <person name="Rose M."/>
            <person name="Scharfe M."/>
            <person name="Scherens B."/>
            <person name="Scholler P."/>
            <person name="Schwager C."/>
            <person name="Schwarz S."/>
            <person name="Underwood A.P."/>
            <person name="Urrestarazu L.A."/>
            <person name="Vandenbol M."/>
            <person name="Verhasselt P."/>
            <person name="Vierendeels F."/>
            <person name="Voet M."/>
            <person name="Volckaert G."/>
            <person name="Voss H."/>
            <person name="Wambutt R."/>
            <person name="Wedler E."/>
            <person name="Wedler H."/>
            <person name="Zimmermann F.K."/>
            <person name="Zollner A."/>
            <person name="Hani J."/>
            <person name="Hoheisel J.D."/>
        </authorList>
    </citation>
    <scope>NUCLEOTIDE SEQUENCE [LARGE SCALE GENOMIC DNA]</scope>
    <source>
        <strain>ATCC 204508 / S288c</strain>
    </source>
</reference>
<reference key="2">
    <citation type="journal article" date="2014" name="G3 (Bethesda)">
        <title>The reference genome sequence of Saccharomyces cerevisiae: Then and now.</title>
        <authorList>
            <person name="Engel S.R."/>
            <person name="Dietrich F.S."/>
            <person name="Fisk D.G."/>
            <person name="Binkley G."/>
            <person name="Balakrishnan R."/>
            <person name="Costanzo M.C."/>
            <person name="Dwight S.S."/>
            <person name="Hitz B.C."/>
            <person name="Karra K."/>
            <person name="Nash R.S."/>
            <person name="Weng S."/>
            <person name="Wong E.D."/>
            <person name="Lloyd P."/>
            <person name="Skrzypek M.S."/>
            <person name="Miyasato S.R."/>
            <person name="Simison M."/>
            <person name="Cherry J.M."/>
        </authorList>
    </citation>
    <scope>GENOME REANNOTATION</scope>
    <source>
        <strain>ATCC 204508 / S288c</strain>
    </source>
</reference>
<reference key="3">
    <citation type="journal article" date="2007" name="Genome Res.">
        <title>Approaching a complete repository of sequence-verified protein-encoding clones for Saccharomyces cerevisiae.</title>
        <authorList>
            <person name="Hu Y."/>
            <person name="Rolfs A."/>
            <person name="Bhullar B."/>
            <person name="Murthy T.V.S."/>
            <person name="Zhu C."/>
            <person name="Berger M.F."/>
            <person name="Camargo A.A."/>
            <person name="Kelley F."/>
            <person name="McCarron S."/>
            <person name="Jepson D."/>
            <person name="Richardson A."/>
            <person name="Raphael J."/>
            <person name="Moreira D."/>
            <person name="Taycher E."/>
            <person name="Zuo D."/>
            <person name="Mohr S."/>
            <person name="Kane M.F."/>
            <person name="Williamson J."/>
            <person name="Simpson A.J.G."/>
            <person name="Bulyk M.L."/>
            <person name="Harlow E."/>
            <person name="Marsischky G."/>
            <person name="Kolodner R.D."/>
            <person name="LaBaer J."/>
        </authorList>
    </citation>
    <scope>NUCLEOTIDE SEQUENCE [GENOMIC DNA]</scope>
    <source>
        <strain>ATCC 204508 / S288c</strain>
    </source>
</reference>
<reference key="4">
    <citation type="journal article" date="2003" name="Nature">
        <title>Global analysis of protein localization in budding yeast.</title>
        <authorList>
            <person name="Huh W.-K."/>
            <person name="Falvo J.V."/>
            <person name="Gerke L.C."/>
            <person name="Carroll A.S."/>
            <person name="Howson R.W."/>
            <person name="Weissman J.S."/>
            <person name="O'Shea E.K."/>
        </authorList>
    </citation>
    <scope>SUBCELLULAR LOCATION [LARGE SCALE ANALYSIS]</scope>
</reference>
<reference key="5">
    <citation type="journal article" date="2007" name="J. Proteome Res.">
        <title>Large-scale phosphorylation analysis of alpha-factor-arrested Saccharomyces cerevisiae.</title>
        <authorList>
            <person name="Li X."/>
            <person name="Gerber S.A."/>
            <person name="Rudner A.D."/>
            <person name="Beausoleil S.A."/>
            <person name="Haas W."/>
            <person name="Villen J."/>
            <person name="Elias J.E."/>
            <person name="Gygi S.P."/>
        </authorList>
    </citation>
    <scope>IDENTIFICATION BY MASS SPECTROMETRY [LARGE SCALE ANALYSIS]</scope>
    <source>
        <strain>ADR376</strain>
    </source>
</reference>
<reference key="6">
    <citation type="journal article" date="2008" name="Mol. Cell. Proteomics">
        <title>A multidimensional chromatography technology for in-depth phosphoproteome analysis.</title>
        <authorList>
            <person name="Albuquerque C.P."/>
            <person name="Smolka M.B."/>
            <person name="Payne S.H."/>
            <person name="Bafna V."/>
            <person name="Eng J."/>
            <person name="Zhou H."/>
        </authorList>
    </citation>
    <scope>PHOSPHORYLATION [LARGE SCALE ANALYSIS] AT SER-127</scope>
    <scope>IDENTIFICATION BY MASS SPECTROMETRY [LARGE SCALE ANALYSIS]</scope>
</reference>
<reference key="7">
    <citation type="journal article" date="2009" name="Mol. Biol. Cell">
        <title>A genomic screen for yeast mutants defective in selective mitochondria autophagy.</title>
        <authorList>
            <person name="Kanki T."/>
            <person name="Wang K."/>
            <person name="Baba M."/>
            <person name="Bartholomew C.R."/>
            <person name="Lynch-Day M.A."/>
            <person name="Du Z."/>
            <person name="Geng J."/>
            <person name="Mao K."/>
            <person name="Yang Z."/>
            <person name="Yen W.L."/>
            <person name="Klionsky D.J."/>
        </authorList>
    </citation>
    <scope>FUNCTION</scope>
</reference>
<reference key="8">
    <citation type="journal article" date="2009" name="Science">
        <title>Global analysis of Cdk1 substrate phosphorylation sites provides insights into evolution.</title>
        <authorList>
            <person name="Holt L.J."/>
            <person name="Tuch B.B."/>
            <person name="Villen J."/>
            <person name="Johnson A.D."/>
            <person name="Gygi S.P."/>
            <person name="Morgan D.O."/>
        </authorList>
    </citation>
    <scope>PHOSPHORYLATION [LARGE SCALE ANALYSIS] AT SER-127 AND SER-129</scope>
    <scope>IDENTIFICATION BY MASS SPECTROMETRY [LARGE SCALE ANALYSIS]</scope>
</reference>
<reference key="9">
    <citation type="journal article" date="2010" name="Autophagy">
        <title>A genomic screen for yeast mutants defective in mitophagy.</title>
        <authorList>
            <person name="Kanki T."/>
            <person name="Wang K."/>
            <person name="Klionsky D.J."/>
        </authorList>
    </citation>
    <scope>FUNCTION</scope>
</reference>
<accession>Q06485</accession>
<accession>D6VYZ4</accession>
<organism>
    <name type="scientific">Saccharomyces cerevisiae (strain ATCC 204508 / S288c)</name>
    <name type="common">Baker's yeast</name>
    <dbReference type="NCBI Taxonomy" id="559292"/>
    <lineage>
        <taxon>Eukaryota</taxon>
        <taxon>Fungi</taxon>
        <taxon>Dikarya</taxon>
        <taxon>Ascomycota</taxon>
        <taxon>Saccharomycotina</taxon>
        <taxon>Saccharomycetes</taxon>
        <taxon>Saccharomycetales</taxon>
        <taxon>Saccharomycetaceae</taxon>
        <taxon>Saccharomyces</taxon>
    </lineage>
</organism>
<gene>
    <name type="primary">ATG33</name>
    <name type="ordered locus">YLR356W</name>
</gene>
<name>ATG33_YEAST</name>
<keyword id="KW-0072">Autophagy</keyword>
<keyword id="KW-0472">Membrane</keyword>
<keyword id="KW-0496">Mitochondrion</keyword>
<keyword id="KW-0597">Phosphoprotein</keyword>
<keyword id="KW-1185">Reference proteome</keyword>
<keyword id="KW-0812">Transmembrane</keyword>
<keyword id="KW-1133">Transmembrane helix</keyword>
<proteinExistence type="evidence at protein level"/>
<dbReference type="EMBL" id="U19102">
    <property type="protein sequence ID" value="AAB67748.1"/>
    <property type="molecule type" value="Genomic_DNA"/>
</dbReference>
<dbReference type="EMBL" id="AY558222">
    <property type="protein sequence ID" value="AAS56548.1"/>
    <property type="molecule type" value="Genomic_DNA"/>
</dbReference>
<dbReference type="EMBL" id="BK006945">
    <property type="protein sequence ID" value="DAA09660.1"/>
    <property type="molecule type" value="Genomic_DNA"/>
</dbReference>
<dbReference type="PIR" id="S51464">
    <property type="entry name" value="S51464"/>
</dbReference>
<dbReference type="RefSeq" id="NP_013460.1">
    <property type="nucleotide sequence ID" value="NM_001182245.1"/>
</dbReference>
<dbReference type="BioGRID" id="31618">
    <property type="interactions" value="171"/>
</dbReference>
<dbReference type="DIP" id="DIP-4664N"/>
<dbReference type="FunCoup" id="Q06485">
    <property type="interactions" value="174"/>
</dbReference>
<dbReference type="IntAct" id="Q06485">
    <property type="interactions" value="36"/>
</dbReference>
<dbReference type="MINT" id="Q06485"/>
<dbReference type="STRING" id="4932.YLR356W"/>
<dbReference type="iPTMnet" id="Q06485"/>
<dbReference type="PaxDb" id="4932-YLR356W"/>
<dbReference type="PeptideAtlas" id="Q06485"/>
<dbReference type="EnsemblFungi" id="YLR356W_mRNA">
    <property type="protein sequence ID" value="YLR356W"/>
    <property type="gene ID" value="YLR356W"/>
</dbReference>
<dbReference type="GeneID" id="851070"/>
<dbReference type="KEGG" id="sce:YLR356W"/>
<dbReference type="AGR" id="SGD:S000004348"/>
<dbReference type="SGD" id="S000004348">
    <property type="gene designation" value="ATG33"/>
</dbReference>
<dbReference type="VEuPathDB" id="FungiDB:YLR356W"/>
<dbReference type="eggNOG" id="ENOG502S27M">
    <property type="taxonomic scope" value="Eukaryota"/>
</dbReference>
<dbReference type="GeneTree" id="ENSGT00940000176491"/>
<dbReference type="HOGENOM" id="CLU_105986_1_0_1"/>
<dbReference type="InParanoid" id="Q06485"/>
<dbReference type="OMA" id="HANCNAS"/>
<dbReference type="OrthoDB" id="5336366at2759"/>
<dbReference type="BioCyc" id="YEAST:G3O-32428-MONOMER"/>
<dbReference type="BioGRID-ORCS" id="851070">
    <property type="hits" value="1 hit in 10 CRISPR screens"/>
</dbReference>
<dbReference type="PRO" id="PR:Q06485"/>
<dbReference type="Proteomes" id="UP000002311">
    <property type="component" value="Chromosome XII"/>
</dbReference>
<dbReference type="RNAct" id="Q06485">
    <property type="molecule type" value="protein"/>
</dbReference>
<dbReference type="GO" id="GO:0031966">
    <property type="term" value="C:mitochondrial membrane"/>
    <property type="evidence" value="ECO:0007669"/>
    <property type="project" value="UniProtKB-SubCell"/>
</dbReference>
<dbReference type="GO" id="GO:0005739">
    <property type="term" value="C:mitochondrion"/>
    <property type="evidence" value="ECO:0000314"/>
    <property type="project" value="SGD"/>
</dbReference>
<dbReference type="GO" id="GO:0000422">
    <property type="term" value="P:autophagy of mitochondrion"/>
    <property type="evidence" value="ECO:0000315"/>
    <property type="project" value="SGD"/>
</dbReference>
<dbReference type="GO" id="GO:0016236">
    <property type="term" value="P:macroautophagy"/>
    <property type="evidence" value="ECO:0000315"/>
    <property type="project" value="SGD"/>
</dbReference>
<dbReference type="InterPro" id="IPR051668">
    <property type="entry name" value="ATG33"/>
</dbReference>
<dbReference type="PANTHER" id="PTHR37278">
    <property type="entry name" value="AUTOPHAGY-RELATED PROTEIN 33-RELATED"/>
    <property type="match status" value="1"/>
</dbReference>
<dbReference type="PANTHER" id="PTHR37278:SF1">
    <property type="entry name" value="AUTOPHAGY-RELATED PROTEIN 33-RELATED"/>
    <property type="match status" value="1"/>
</dbReference>
<comment type="function">
    <text evidence="3 4">Involved in the selective degradation of mitochondria via autophagy during starvation and at post-log phase.</text>
</comment>
<comment type="subcellular location">
    <subcellularLocation>
        <location evidence="5">Mitochondrion membrane</location>
        <topology evidence="5">Multi-pass membrane protein</topology>
    </subcellularLocation>
</comment>
<comment type="similarity">
    <text evidence="5">Belongs to the ATG33 family.</text>
</comment>
<evidence type="ECO:0000255" key="1"/>
<evidence type="ECO:0000256" key="2">
    <source>
        <dbReference type="SAM" id="MobiDB-lite"/>
    </source>
</evidence>
<evidence type="ECO:0000269" key="3">
    <source>
    </source>
</evidence>
<evidence type="ECO:0000269" key="4">
    <source>
    </source>
</evidence>
<evidence type="ECO:0000305" key="5"/>
<evidence type="ECO:0007744" key="6">
    <source>
    </source>
</evidence>
<evidence type="ECO:0007744" key="7">
    <source>
    </source>
</evidence>
<feature type="chain" id="PRO_0000247213" description="Autophagy-related protein 33">
    <location>
        <begin position="1"/>
        <end position="197"/>
    </location>
</feature>
<feature type="transmembrane region" description="Helical" evidence="1">
    <location>
        <begin position="10"/>
        <end position="30"/>
    </location>
</feature>
<feature type="transmembrane region" description="Helical" evidence="1">
    <location>
        <begin position="52"/>
        <end position="72"/>
    </location>
</feature>
<feature type="transmembrane region" description="Helical" evidence="1">
    <location>
        <begin position="78"/>
        <end position="98"/>
    </location>
</feature>
<feature type="transmembrane region" description="Helical" evidence="1">
    <location>
        <begin position="172"/>
        <end position="192"/>
    </location>
</feature>
<feature type="region of interest" description="Disordered" evidence="2">
    <location>
        <begin position="135"/>
        <end position="154"/>
    </location>
</feature>
<feature type="compositionally biased region" description="Basic and acidic residues" evidence="2">
    <location>
        <begin position="135"/>
        <end position="148"/>
    </location>
</feature>
<feature type="modified residue" description="Phosphoserine" evidence="6 7">
    <location>
        <position position="127"/>
    </location>
</feature>
<feature type="modified residue" description="Phosphoserine" evidence="7">
    <location>
        <position position="129"/>
    </location>
</feature>
<sequence>MSVCLAITKGIAVSSIGLYSGLLASASLITSTTPLEVLTGSLTPTLTTLKNAATALGAFASTFFCVSFFGAPPSLRHPYLLYGMLVAPLSSFVLGCASNYQSRKYSKVSKESSLFPEDSKLAASELSDSIIDLGEDNHASENTPRDGKPAATTVSKPAEALHTGPPIHTKNLIAATAIAIVGFVQAVIGVYGEGQFI</sequence>